<comment type="function">
    <text evidence="2">Component of the cytochrome c oxidase, the last enzyme in the mitochondrial electron transport chain which drives oxidative phosphorylation. The respiratory chain contains 3 multisubunit complexes succinate dehydrogenase (complex II, CII), ubiquinol-cytochrome c oxidoreductase (cytochrome b-c1 complex, complex III, CIII) and cytochrome c oxidase (complex IV, CIV), that cooperate to transfer electrons derived from NADH and succinate to molecular oxygen, creating an electrochemical gradient over the inner membrane that drives transmembrane transport and the ATP synthase. Cytochrome c oxidase is the component of the respiratory chain that catalyzes the reduction of oxygen to water. Electrons originating from reduced cytochrome c in the intermembrane space (IMS) are transferred via the dinuclear copper A center (CU(A)) of subunit 2 and heme A of subunit 1 to the active site in subunit 1, a binuclear center (BNC) formed by heme A3 and copper B (CU(B)). The BNC reduces molecular oxygen to 2 water molecules using 4 electrons from cytochrome c in the IMS and 4 protons from the mitochondrial matrix.</text>
</comment>
<comment type="catalytic activity">
    <reaction evidence="2">
        <text>4 Fe(II)-[cytochrome c] + O2 + 8 H(+)(in) = 4 Fe(III)-[cytochrome c] + 2 H2O + 4 H(+)(out)</text>
        <dbReference type="Rhea" id="RHEA:11436"/>
        <dbReference type="Rhea" id="RHEA-COMP:10350"/>
        <dbReference type="Rhea" id="RHEA-COMP:14399"/>
        <dbReference type="ChEBI" id="CHEBI:15377"/>
        <dbReference type="ChEBI" id="CHEBI:15378"/>
        <dbReference type="ChEBI" id="CHEBI:15379"/>
        <dbReference type="ChEBI" id="CHEBI:29033"/>
        <dbReference type="ChEBI" id="CHEBI:29034"/>
        <dbReference type="EC" id="7.1.1.9"/>
    </reaction>
    <physiologicalReaction direction="left-to-right" evidence="2">
        <dbReference type="Rhea" id="RHEA:11437"/>
    </physiologicalReaction>
</comment>
<comment type="cofactor">
    <cofactor evidence="3">
        <name>Cu cation</name>
        <dbReference type="ChEBI" id="CHEBI:23378"/>
    </cofactor>
    <text evidence="3">Binds a dinuclear copper A center per subunit.</text>
</comment>
<comment type="subunit">
    <text evidence="1 3">Component of the cytochrome c oxidase (complex IV, CIV), a multisubunit enzyme composed of 14 subunits. The complex is composed of a catalytic core of 3 subunits MT-CO1, MT-CO2 and MT-CO3, encoded in the mitochondrial DNA, and 11 supernumerary subunits COX4I, COX5A, COX5B, COX6A, COX6B, COX6C, COX7A, COX7B, COX7C, COX8 and NDUFA4, which are encoded in the nuclear genome. The complex exists as a monomer or a dimer and forms supercomplexes (SCs) in the inner mitochondrial membrane with NADH-ubiquinone oxidoreductase (complex I, CI) and ubiquinol-cytochrome c oxidoreductase (cytochrome b-c1 complex, complex III, CIII), resulting in different assemblies (supercomplex SCI(1)III(2)IV(1) and megacomplex MCI(2)III(2)IV(2)) (By similarity). Found in a complex with TMEM177, COA6, COX18, COX20, SCO1 and SCO2. Interacts with TMEM177 in a COX20-dependent manner. Interacts with COX20. Interacts with COX16 (By similarity).</text>
</comment>
<comment type="subcellular location">
    <subcellularLocation>
        <location evidence="3">Mitochondrion inner membrane</location>
        <topology evidence="3">Multi-pass membrane protein</topology>
    </subcellularLocation>
</comment>
<comment type="similarity">
    <text evidence="4">Belongs to the cytochrome c oxidase subunit 2 family.</text>
</comment>
<sequence>MAHPLQLGLQDASSPIMEELLYFHDHALMIVFLISSLVLYTISLMLTTKLMHTSTMNAQMVETMWTILPAVILTSIALPSLRILYMTDEINNPLLTIKAMGHQWYWSYEYTDYTDLNFDSYMTPTLDLKPGELRLLEVDNRTVLPMETPIRMLISSEDVLHSWAVPSLGLKTDAIPGRLNQTTLSATRPGLFYGQCSEICGSNHSFMPIVLELVPLKHFETWSTLTS</sequence>
<evidence type="ECO:0000250" key="1">
    <source>
        <dbReference type="UniProtKB" id="P00403"/>
    </source>
</evidence>
<evidence type="ECO:0000250" key="2">
    <source>
        <dbReference type="UniProtKB" id="P00410"/>
    </source>
</evidence>
<evidence type="ECO:0000250" key="3">
    <source>
        <dbReference type="UniProtKB" id="P68530"/>
    </source>
</evidence>
<evidence type="ECO:0000305" key="4"/>
<name>COX2_GALVR</name>
<feature type="chain" id="PRO_0000183563" description="Cytochrome c oxidase subunit 2">
    <location>
        <begin position="1"/>
        <end position="227"/>
    </location>
</feature>
<feature type="topological domain" description="Mitochondrial intermembrane" evidence="3">
    <location>
        <begin position="1"/>
        <end position="14"/>
    </location>
</feature>
<feature type="transmembrane region" description="Helical; Name=I" evidence="3">
    <location>
        <begin position="15"/>
        <end position="45"/>
    </location>
</feature>
<feature type="topological domain" description="Mitochondrial matrix" evidence="3">
    <location>
        <begin position="46"/>
        <end position="59"/>
    </location>
</feature>
<feature type="transmembrane region" description="Helical; Name=II" evidence="3">
    <location>
        <begin position="60"/>
        <end position="87"/>
    </location>
</feature>
<feature type="topological domain" description="Mitochondrial intermembrane" evidence="3">
    <location>
        <begin position="88"/>
        <end position="227"/>
    </location>
</feature>
<feature type="binding site" evidence="3">
    <location>
        <position position="161"/>
    </location>
    <ligand>
        <name>Cu cation</name>
        <dbReference type="ChEBI" id="CHEBI:23378"/>
        <label>A1</label>
    </ligand>
</feature>
<feature type="binding site" evidence="3">
    <location>
        <position position="196"/>
    </location>
    <ligand>
        <name>Cu cation</name>
        <dbReference type="ChEBI" id="CHEBI:23378"/>
        <label>A1</label>
    </ligand>
</feature>
<feature type="binding site" evidence="3">
    <location>
        <position position="196"/>
    </location>
    <ligand>
        <name>Cu cation</name>
        <dbReference type="ChEBI" id="CHEBI:23378"/>
        <label>A2</label>
    </ligand>
</feature>
<feature type="binding site" evidence="3">
    <location>
        <position position="198"/>
    </location>
    <ligand>
        <name>Cu cation</name>
        <dbReference type="ChEBI" id="CHEBI:23378"/>
        <label>A2</label>
    </ligand>
</feature>
<feature type="binding site" evidence="3">
    <location>
        <position position="198"/>
    </location>
    <ligand>
        <name>Mg(2+)</name>
        <dbReference type="ChEBI" id="CHEBI:18420"/>
        <note>ligand shared with MT-CO1</note>
    </ligand>
</feature>
<feature type="binding site" evidence="3">
    <location>
        <position position="200"/>
    </location>
    <ligand>
        <name>Cu cation</name>
        <dbReference type="ChEBI" id="CHEBI:23378"/>
        <label>A1</label>
    </ligand>
</feature>
<feature type="binding site" evidence="3">
    <location>
        <position position="200"/>
    </location>
    <ligand>
        <name>Cu cation</name>
        <dbReference type="ChEBI" id="CHEBI:23378"/>
        <label>A2</label>
    </ligand>
</feature>
<feature type="binding site" evidence="3">
    <location>
        <position position="204"/>
    </location>
    <ligand>
        <name>Cu cation</name>
        <dbReference type="ChEBI" id="CHEBI:23378"/>
        <label>A2</label>
    </ligand>
</feature>
<feature type="binding site" evidence="3">
    <location>
        <position position="207"/>
    </location>
    <ligand>
        <name>Cu cation</name>
        <dbReference type="ChEBI" id="CHEBI:23378"/>
        <label>A1</label>
    </ligand>
</feature>
<organism>
    <name type="scientific">Galeopterus variegatus</name>
    <name type="common">Malayan flying lemur</name>
    <name type="synonym">Cynocephalus variegatus</name>
    <dbReference type="NCBI Taxonomy" id="482537"/>
    <lineage>
        <taxon>Eukaryota</taxon>
        <taxon>Metazoa</taxon>
        <taxon>Chordata</taxon>
        <taxon>Craniata</taxon>
        <taxon>Vertebrata</taxon>
        <taxon>Euteleostomi</taxon>
        <taxon>Mammalia</taxon>
        <taxon>Eutheria</taxon>
        <taxon>Euarchontoglires</taxon>
        <taxon>Dermoptera</taxon>
        <taxon>Cynocephalidae</taxon>
        <taxon>Galeopterus</taxon>
    </lineage>
</organism>
<protein>
    <recommendedName>
        <fullName>Cytochrome c oxidase subunit 2</fullName>
        <ecNumber>7.1.1.9</ecNumber>
    </recommendedName>
    <alternativeName>
        <fullName>Cytochrome c oxidase polypeptide II</fullName>
    </alternativeName>
</protein>
<proteinExistence type="inferred from homology"/>
<gene>
    <name type="primary">MT-CO2</name>
    <name type="synonym">COII</name>
    <name type="synonym">COX2</name>
    <name type="synonym">COXII</name>
    <name type="synonym">MTCO2</name>
</gene>
<reference key="1">
    <citation type="journal article" date="1991" name="Proc. Natl. Acad. Sci. U.S.A.">
        <title>Molecular phylogeny of the superorder Archonta.</title>
        <authorList>
            <person name="Adkins R.M."/>
            <person name="Honeycutt R.L."/>
        </authorList>
    </citation>
    <scope>NUCLEOTIDE SEQUENCE [GENOMIC DNA]</scope>
</reference>
<geneLocation type="mitochondrion"/>
<accession>P50686</accession>
<keyword id="KW-0186">Copper</keyword>
<keyword id="KW-0249">Electron transport</keyword>
<keyword id="KW-0460">Magnesium</keyword>
<keyword id="KW-0472">Membrane</keyword>
<keyword id="KW-0479">Metal-binding</keyword>
<keyword id="KW-0496">Mitochondrion</keyword>
<keyword id="KW-0999">Mitochondrion inner membrane</keyword>
<keyword id="KW-0679">Respiratory chain</keyword>
<keyword id="KW-1278">Translocase</keyword>
<keyword id="KW-0812">Transmembrane</keyword>
<keyword id="KW-1133">Transmembrane helix</keyword>
<keyword id="KW-0813">Transport</keyword>
<dbReference type="EC" id="7.1.1.9"/>
<dbReference type="EMBL" id="M80904">
    <property type="protein sequence ID" value="AAA62183.1"/>
    <property type="molecule type" value="Genomic_DNA"/>
</dbReference>
<dbReference type="PIR" id="I37015">
    <property type="entry name" value="I37015"/>
</dbReference>
<dbReference type="SMR" id="P50686"/>
<dbReference type="Proteomes" id="UP000694923">
    <property type="component" value="Mitochondrion MT"/>
</dbReference>
<dbReference type="GO" id="GO:0005743">
    <property type="term" value="C:mitochondrial inner membrane"/>
    <property type="evidence" value="ECO:0007669"/>
    <property type="project" value="UniProtKB-SubCell"/>
</dbReference>
<dbReference type="GO" id="GO:0045277">
    <property type="term" value="C:respiratory chain complex IV"/>
    <property type="evidence" value="ECO:0000250"/>
    <property type="project" value="UniProtKB"/>
</dbReference>
<dbReference type="GO" id="GO:0005507">
    <property type="term" value="F:copper ion binding"/>
    <property type="evidence" value="ECO:0007669"/>
    <property type="project" value="InterPro"/>
</dbReference>
<dbReference type="GO" id="GO:0004129">
    <property type="term" value="F:cytochrome-c oxidase activity"/>
    <property type="evidence" value="ECO:0007669"/>
    <property type="project" value="UniProtKB-EC"/>
</dbReference>
<dbReference type="GO" id="GO:0042773">
    <property type="term" value="P:ATP synthesis coupled electron transport"/>
    <property type="evidence" value="ECO:0007669"/>
    <property type="project" value="TreeGrafter"/>
</dbReference>
<dbReference type="CDD" id="cd13912">
    <property type="entry name" value="CcO_II_C"/>
    <property type="match status" value="1"/>
</dbReference>
<dbReference type="FunFam" id="1.10.287.90:FF:000001">
    <property type="entry name" value="Cytochrome c oxidase subunit 2"/>
    <property type="match status" value="1"/>
</dbReference>
<dbReference type="FunFam" id="2.60.40.420:FF:000001">
    <property type="entry name" value="Cytochrome c oxidase subunit 2"/>
    <property type="match status" value="1"/>
</dbReference>
<dbReference type="Gene3D" id="1.10.287.90">
    <property type="match status" value="1"/>
</dbReference>
<dbReference type="Gene3D" id="2.60.40.420">
    <property type="entry name" value="Cupredoxins - blue copper proteins"/>
    <property type="match status" value="1"/>
</dbReference>
<dbReference type="InterPro" id="IPR045187">
    <property type="entry name" value="CcO_II"/>
</dbReference>
<dbReference type="InterPro" id="IPR002429">
    <property type="entry name" value="CcO_II-like_C"/>
</dbReference>
<dbReference type="InterPro" id="IPR034210">
    <property type="entry name" value="CcO_II_C"/>
</dbReference>
<dbReference type="InterPro" id="IPR001505">
    <property type="entry name" value="Copper_CuA"/>
</dbReference>
<dbReference type="InterPro" id="IPR008972">
    <property type="entry name" value="Cupredoxin"/>
</dbReference>
<dbReference type="InterPro" id="IPR014222">
    <property type="entry name" value="Cyt_c_oxidase_su2"/>
</dbReference>
<dbReference type="InterPro" id="IPR011759">
    <property type="entry name" value="Cyt_c_oxidase_su2_TM_dom"/>
</dbReference>
<dbReference type="InterPro" id="IPR036257">
    <property type="entry name" value="Cyt_c_oxidase_su2_TM_sf"/>
</dbReference>
<dbReference type="NCBIfam" id="TIGR02866">
    <property type="entry name" value="CoxB"/>
    <property type="match status" value="1"/>
</dbReference>
<dbReference type="PANTHER" id="PTHR22888:SF9">
    <property type="entry name" value="CYTOCHROME C OXIDASE SUBUNIT 2"/>
    <property type="match status" value="1"/>
</dbReference>
<dbReference type="PANTHER" id="PTHR22888">
    <property type="entry name" value="CYTOCHROME C OXIDASE, SUBUNIT II"/>
    <property type="match status" value="1"/>
</dbReference>
<dbReference type="Pfam" id="PF00116">
    <property type="entry name" value="COX2"/>
    <property type="match status" value="1"/>
</dbReference>
<dbReference type="Pfam" id="PF02790">
    <property type="entry name" value="COX2_TM"/>
    <property type="match status" value="1"/>
</dbReference>
<dbReference type="PRINTS" id="PR01166">
    <property type="entry name" value="CYCOXIDASEII"/>
</dbReference>
<dbReference type="SUPFAM" id="SSF49503">
    <property type="entry name" value="Cupredoxins"/>
    <property type="match status" value="1"/>
</dbReference>
<dbReference type="SUPFAM" id="SSF81464">
    <property type="entry name" value="Cytochrome c oxidase subunit II-like, transmembrane region"/>
    <property type="match status" value="1"/>
</dbReference>
<dbReference type="PROSITE" id="PS00078">
    <property type="entry name" value="COX2"/>
    <property type="match status" value="1"/>
</dbReference>
<dbReference type="PROSITE" id="PS50857">
    <property type="entry name" value="COX2_CUA"/>
    <property type="match status" value="1"/>
</dbReference>
<dbReference type="PROSITE" id="PS50999">
    <property type="entry name" value="COX2_TM"/>
    <property type="match status" value="1"/>
</dbReference>